<proteinExistence type="inferred from homology"/>
<reference key="1">
    <citation type="journal article" date="2002" name="Nat. Genet.">
        <title>Genome sequence of the endocellular obligate symbiont of tsetse flies, Wigglesworthia glossinidia.</title>
        <authorList>
            <person name="Akman L."/>
            <person name="Yamashita A."/>
            <person name="Watanabe H."/>
            <person name="Oshima K."/>
            <person name="Shiba T."/>
            <person name="Hattori M."/>
            <person name="Aksoy S."/>
        </authorList>
    </citation>
    <scope>NUCLEOTIDE SEQUENCE [LARGE SCALE GENOMIC DNA]</scope>
</reference>
<name>RS10_WIGBR</name>
<accession>Q8D213</accession>
<gene>
    <name evidence="1" type="primary">rpsJ</name>
    <name type="ordered locus">WIGBR5420</name>
</gene>
<feature type="chain" id="PRO_0000146633" description="Small ribosomal subunit protein uS10">
    <location>
        <begin position="1"/>
        <end position="103"/>
    </location>
</feature>
<dbReference type="EMBL" id="BA000021">
    <property type="protein sequence ID" value="BAC24688.1"/>
    <property type="molecule type" value="Genomic_DNA"/>
</dbReference>
<dbReference type="SMR" id="Q8D213"/>
<dbReference type="STRING" id="36870.gene:10369051"/>
<dbReference type="KEGG" id="wbr:rpsJ"/>
<dbReference type="eggNOG" id="COG0051">
    <property type="taxonomic scope" value="Bacteria"/>
</dbReference>
<dbReference type="HOGENOM" id="CLU_122625_1_3_6"/>
<dbReference type="OrthoDB" id="9804464at2"/>
<dbReference type="Proteomes" id="UP000000562">
    <property type="component" value="Chromosome"/>
</dbReference>
<dbReference type="GO" id="GO:1990904">
    <property type="term" value="C:ribonucleoprotein complex"/>
    <property type="evidence" value="ECO:0007669"/>
    <property type="project" value="UniProtKB-KW"/>
</dbReference>
<dbReference type="GO" id="GO:0005840">
    <property type="term" value="C:ribosome"/>
    <property type="evidence" value="ECO:0007669"/>
    <property type="project" value="UniProtKB-KW"/>
</dbReference>
<dbReference type="GO" id="GO:0003735">
    <property type="term" value="F:structural constituent of ribosome"/>
    <property type="evidence" value="ECO:0007669"/>
    <property type="project" value="InterPro"/>
</dbReference>
<dbReference type="GO" id="GO:0000049">
    <property type="term" value="F:tRNA binding"/>
    <property type="evidence" value="ECO:0007669"/>
    <property type="project" value="UniProtKB-UniRule"/>
</dbReference>
<dbReference type="GO" id="GO:0006412">
    <property type="term" value="P:translation"/>
    <property type="evidence" value="ECO:0007669"/>
    <property type="project" value="UniProtKB-UniRule"/>
</dbReference>
<dbReference type="FunFam" id="3.30.70.600:FF:000001">
    <property type="entry name" value="30S ribosomal protein S10"/>
    <property type="match status" value="1"/>
</dbReference>
<dbReference type="Gene3D" id="3.30.70.600">
    <property type="entry name" value="Ribosomal protein S10 domain"/>
    <property type="match status" value="1"/>
</dbReference>
<dbReference type="HAMAP" id="MF_00508">
    <property type="entry name" value="Ribosomal_uS10"/>
    <property type="match status" value="1"/>
</dbReference>
<dbReference type="InterPro" id="IPR001848">
    <property type="entry name" value="Ribosomal_uS10"/>
</dbReference>
<dbReference type="InterPro" id="IPR018268">
    <property type="entry name" value="Ribosomal_uS10_CS"/>
</dbReference>
<dbReference type="InterPro" id="IPR027486">
    <property type="entry name" value="Ribosomal_uS10_dom"/>
</dbReference>
<dbReference type="InterPro" id="IPR036838">
    <property type="entry name" value="Ribosomal_uS10_dom_sf"/>
</dbReference>
<dbReference type="NCBIfam" id="NF001861">
    <property type="entry name" value="PRK00596.1"/>
    <property type="match status" value="1"/>
</dbReference>
<dbReference type="NCBIfam" id="TIGR01049">
    <property type="entry name" value="rpsJ_bact"/>
    <property type="match status" value="1"/>
</dbReference>
<dbReference type="PANTHER" id="PTHR11700">
    <property type="entry name" value="30S RIBOSOMAL PROTEIN S10 FAMILY MEMBER"/>
    <property type="match status" value="1"/>
</dbReference>
<dbReference type="Pfam" id="PF00338">
    <property type="entry name" value="Ribosomal_S10"/>
    <property type="match status" value="1"/>
</dbReference>
<dbReference type="PRINTS" id="PR00971">
    <property type="entry name" value="RIBOSOMALS10"/>
</dbReference>
<dbReference type="SMART" id="SM01403">
    <property type="entry name" value="Ribosomal_S10"/>
    <property type="match status" value="1"/>
</dbReference>
<dbReference type="SUPFAM" id="SSF54999">
    <property type="entry name" value="Ribosomal protein S10"/>
    <property type="match status" value="1"/>
</dbReference>
<dbReference type="PROSITE" id="PS00361">
    <property type="entry name" value="RIBOSOMAL_S10"/>
    <property type="match status" value="1"/>
</dbReference>
<protein>
    <recommendedName>
        <fullName evidence="1">Small ribosomal subunit protein uS10</fullName>
    </recommendedName>
    <alternativeName>
        <fullName evidence="2">30S ribosomal protein S10</fullName>
    </alternativeName>
</protein>
<organism>
    <name type="scientific">Wigglesworthia glossinidia brevipalpis</name>
    <dbReference type="NCBI Taxonomy" id="36870"/>
    <lineage>
        <taxon>Bacteria</taxon>
        <taxon>Pseudomonadati</taxon>
        <taxon>Pseudomonadota</taxon>
        <taxon>Gammaproteobacteria</taxon>
        <taxon>Enterobacterales</taxon>
        <taxon>Erwiniaceae</taxon>
        <taxon>Wigglesworthia</taxon>
    </lineage>
</organism>
<comment type="function">
    <text evidence="1">Involved in the binding of tRNA to the ribosomes.</text>
</comment>
<comment type="subunit">
    <text evidence="1">Part of the 30S ribosomal subunit.</text>
</comment>
<comment type="similarity">
    <text evidence="1">Belongs to the universal ribosomal protein uS10 family.</text>
</comment>
<evidence type="ECO:0000255" key="1">
    <source>
        <dbReference type="HAMAP-Rule" id="MF_00508"/>
    </source>
</evidence>
<evidence type="ECO:0000305" key="2"/>
<keyword id="KW-1185">Reference proteome</keyword>
<keyword id="KW-0687">Ribonucleoprotein</keyword>
<keyword id="KW-0689">Ribosomal protein</keyword>
<sequence>MQNQRIRIRLKAFDHRLIDQSTSEIVETAKRTGAQVRGPIPLPTRKEKFTILVSPHVDKDARDQYEIRTHKRLVDIVKPTEKTVDALMRLDLASGVDVQISLG</sequence>